<comment type="function">
    <text evidence="1">Acts as a co-chaperone and mediates the association of the chaperones HSP70 and HSP90 probably facilitating substrate transfer from HSP70 to HSP90. Stimulates HSP70 ATPase activity and, in contrast, inhibits HSP90 ATPase activity.</text>
</comment>
<comment type="subunit">
    <text evidence="1">Monomer. Homodimer. Forms a complex composed of HOP and chaperones HSP70 and HSP90; the interaction is stronger in the absence of ATP. Interacts (via TPR 1, 2, 3, 7, 8 and 9 repeats) with HSP70 (via C-terminus); the interaction is direct and is stronger in the absence of ATP. Interacts (via TPR 4, 5 and 6 repeats) with HSP90 (via C-terminus); the interaction is direct.</text>
</comment>
<comment type="subcellular location">
    <subcellularLocation>
        <location evidence="1">Cytoplasm</location>
    </subcellularLocation>
</comment>
<comment type="domain">
    <text evidence="1">The TPR repeats form 3 domains; the TPR 1 domain is composed of TPR 1, 2 and 3 repeats, the TPR2A domain of TPR 4, 5 and 6 repeats and TPR2B domain of TPR 7, 8 and 9 repeats.</text>
</comment>
<dbReference type="EMBL" id="M59770">
    <property type="protein sequence ID" value="AAA29511.1"/>
    <property type="molecule type" value="Genomic_DNA"/>
</dbReference>
<dbReference type="PIR" id="A45594">
    <property type="entry name" value="A45594"/>
</dbReference>
<dbReference type="SMR" id="P25407"/>
<dbReference type="EnsemblProtists" id="CZU00040">
    <property type="protein sequence ID" value="CZU00040"/>
    <property type="gene ID" value="PF3D7_1434300"/>
</dbReference>
<dbReference type="VEuPathDB" id="PlasmoDB:PF3D7_1434300"/>
<dbReference type="VEuPathDB" id="PlasmoDB:Pf7G8-2_000508100"/>
<dbReference type="VEuPathDB" id="PlasmoDB:Pf7G8_140039500"/>
<dbReference type="VEuPathDB" id="PlasmoDB:PfCD01_140039700"/>
<dbReference type="VEuPathDB" id="PlasmoDB:PfDd2_140038700"/>
<dbReference type="VEuPathDB" id="PlasmoDB:PfGA01_140039800"/>
<dbReference type="VEuPathDB" id="PlasmoDB:PfGB4_140040400"/>
<dbReference type="VEuPathDB" id="PlasmoDB:PfGN01_140039600"/>
<dbReference type="VEuPathDB" id="PlasmoDB:PfHB3_140040000"/>
<dbReference type="VEuPathDB" id="PlasmoDB:PfIT_140040700"/>
<dbReference type="VEuPathDB" id="PlasmoDB:PfKE01_140039200"/>
<dbReference type="VEuPathDB" id="PlasmoDB:PfKH01_140039800"/>
<dbReference type="VEuPathDB" id="PlasmoDB:PfKH02_140040000"/>
<dbReference type="VEuPathDB" id="PlasmoDB:PfML01_140039700"/>
<dbReference type="VEuPathDB" id="PlasmoDB:PfNF135_140038500"/>
<dbReference type="VEuPathDB" id="PlasmoDB:PfNF166_140037200"/>
<dbReference type="VEuPathDB" id="PlasmoDB:PfNF54_140038100"/>
<dbReference type="VEuPathDB" id="PlasmoDB:PfSD01_140037600"/>
<dbReference type="VEuPathDB" id="PlasmoDB:PfSN01_140041500"/>
<dbReference type="VEuPathDB" id="PlasmoDB:PfTG01_140039600"/>
<dbReference type="GO" id="GO:0005737">
    <property type="term" value="C:cytoplasm"/>
    <property type="evidence" value="ECO:0007669"/>
    <property type="project" value="UniProtKB-SubCell"/>
</dbReference>
<dbReference type="GO" id="GO:0051879">
    <property type="term" value="F:Hsp90 protein binding"/>
    <property type="evidence" value="ECO:0007669"/>
    <property type="project" value="TreeGrafter"/>
</dbReference>
<dbReference type="FunFam" id="1.25.40.10:FF:000020">
    <property type="entry name" value="Stress-induced phosphoprotein 1"/>
    <property type="match status" value="1"/>
</dbReference>
<dbReference type="Gene3D" id="1.25.40.10">
    <property type="entry name" value="Tetratricopeptide repeat domain"/>
    <property type="match status" value="1"/>
</dbReference>
<dbReference type="InterPro" id="IPR011990">
    <property type="entry name" value="TPR-like_helical_dom_sf"/>
</dbReference>
<dbReference type="InterPro" id="IPR019734">
    <property type="entry name" value="TPR_rpt"/>
</dbReference>
<dbReference type="PANTHER" id="PTHR22904:SF523">
    <property type="entry name" value="STRESS-INDUCED-PHOSPHOPROTEIN 1"/>
    <property type="match status" value="1"/>
</dbReference>
<dbReference type="PANTHER" id="PTHR22904">
    <property type="entry name" value="TPR REPEAT CONTAINING PROTEIN"/>
    <property type="match status" value="1"/>
</dbReference>
<dbReference type="Pfam" id="PF13181">
    <property type="entry name" value="TPR_8"/>
    <property type="match status" value="3"/>
</dbReference>
<dbReference type="SMART" id="SM00028">
    <property type="entry name" value="TPR"/>
    <property type="match status" value="3"/>
</dbReference>
<dbReference type="SUPFAM" id="SSF48452">
    <property type="entry name" value="TPR-like"/>
    <property type="match status" value="1"/>
</dbReference>
<dbReference type="PROSITE" id="PS50005">
    <property type="entry name" value="TPR"/>
    <property type="match status" value="3"/>
</dbReference>
<dbReference type="PROSITE" id="PS50293">
    <property type="entry name" value="TPR_REGION"/>
    <property type="match status" value="1"/>
</dbReference>
<protein>
    <recommendedName>
        <fullName evidence="1">Hsp70-Hsp90 organising protein</fullName>
        <shortName evidence="1">PfHOP</shortName>
    </recommendedName>
    <alternativeName>
        <fullName evidence="1">Stress-inducible protein 1</fullName>
    </alternativeName>
</protein>
<feature type="chain" id="PRO_0000066166" description="Hsp70-Hsp90 organising protein">
    <location>
        <begin position="1"/>
        <end position="252" status="greater than"/>
    </location>
</feature>
<feature type="repeat" description="TPR 1" evidence="2">
    <location>
        <begin position="7"/>
        <end position="40"/>
    </location>
</feature>
<feature type="repeat" description="TPR 2" evidence="2">
    <location>
        <begin position="41"/>
        <end position="74"/>
    </location>
</feature>
<feature type="repeat" description="TPR 3" evidence="2">
    <location>
        <begin position="75"/>
        <end position="108"/>
    </location>
</feature>
<feature type="region of interest" description="Disordered" evidence="3">
    <location>
        <begin position="199"/>
        <end position="252"/>
    </location>
</feature>
<feature type="coiled-coil region" evidence="2">
    <location>
        <begin position="197"/>
        <end position="239"/>
    </location>
</feature>
<feature type="compositionally biased region" description="Basic and acidic residues" evidence="3">
    <location>
        <begin position="201"/>
        <end position="233"/>
    </location>
</feature>
<feature type="compositionally biased region" description="Basic and acidic residues" evidence="3">
    <location>
        <begin position="243"/>
        <end position="252"/>
    </location>
</feature>
<feature type="non-terminal residue">
    <location>
        <position position="252"/>
    </location>
</feature>
<name>HSOP_PLAFA</name>
<reference key="1">
    <citation type="journal article" date="1991" name="Mol. Biochem. Parasitol.">
        <title>The structure of the calmodulin gene of Plasmodium falciparum.</title>
        <authorList>
            <person name="Robson K.J.H."/>
            <person name="Jennings M.W."/>
        </authorList>
    </citation>
    <scope>NUCLEOTIDE SEQUENCE [GENOMIC DNA]</scope>
    <source>
        <strain>T9/96 / Thailand</strain>
    </source>
</reference>
<organism>
    <name type="scientific">Plasmodium falciparum</name>
    <dbReference type="NCBI Taxonomy" id="5833"/>
    <lineage>
        <taxon>Eukaryota</taxon>
        <taxon>Sar</taxon>
        <taxon>Alveolata</taxon>
        <taxon>Apicomplexa</taxon>
        <taxon>Aconoidasida</taxon>
        <taxon>Haemosporida</taxon>
        <taxon>Plasmodiidae</taxon>
        <taxon>Plasmodium</taxon>
        <taxon>Plasmodium (Laverania)</taxon>
    </lineage>
</organism>
<evidence type="ECO:0000250" key="1">
    <source>
        <dbReference type="UniProtKB" id="Q8ILC1"/>
    </source>
</evidence>
<evidence type="ECO:0000255" key="2"/>
<evidence type="ECO:0000256" key="3">
    <source>
        <dbReference type="SAM" id="MobiDB-lite"/>
    </source>
</evidence>
<accession>P25407</accession>
<proteinExistence type="inferred from homology"/>
<keyword id="KW-0143">Chaperone</keyword>
<keyword id="KW-0175">Coiled coil</keyword>
<keyword id="KW-0963">Cytoplasm</keyword>
<keyword id="KW-0677">Repeat</keyword>
<keyword id="KW-0802">TPR repeat</keyword>
<gene>
    <name evidence="1" type="primary">HOP</name>
    <name evidence="1" type="synonym">STI1</name>
</gene>
<sequence>MVNKEEAQRLKELGNKCFQEGKYEEAVKYFSDAITNDPLDHVLYSNLSGAFASLGRFYEALESANKCISIKKDWPKGYIRKGCAEHGLRQLSNAEKTYLEGLKIDPNNKSLQDALSKVRNENMLENAQLIAHLNNIIENDPQLKSYKEENSNYPHELLNTIKSINSNPMNIRIILSTCHPKISEGVEKFFGFKFTGEGNDAEERQRQQREEEERRKKKEEEERKKKEEEEMKKQNRTPEQIQGDEHKLKVMN</sequence>